<keyword id="KW-0963">Cytoplasm</keyword>
<keyword id="KW-0349">Heme</keyword>
<keyword id="KW-0408">Iron</keyword>
<keyword id="KW-0479">Metal-binding</keyword>
<keyword id="KW-0503">Monooxygenase</keyword>
<keyword id="KW-0560">Oxidoreductase</keyword>
<accession>B7IJU1</accession>
<evidence type="ECO:0000255" key="1">
    <source>
        <dbReference type="HAMAP-Rule" id="MF_01272"/>
    </source>
</evidence>
<protein>
    <recommendedName>
        <fullName evidence="1">Heme-degrading monooxygenase</fullName>
        <ecNumber evidence="1">1.14.14.18</ecNumber>
    </recommendedName>
    <alternativeName>
        <fullName evidence="1">Heme oxygenase</fullName>
    </alternativeName>
    <alternativeName>
        <fullName evidence="1">Iron-regulated surface determinant</fullName>
    </alternativeName>
    <alternativeName>
        <fullName evidence="1">Iron-responsive surface determinant</fullName>
    </alternativeName>
</protein>
<proteinExistence type="inferred from homology"/>
<organism>
    <name type="scientific">Bacillus cereus (strain G9842)</name>
    <dbReference type="NCBI Taxonomy" id="405531"/>
    <lineage>
        <taxon>Bacteria</taxon>
        <taxon>Bacillati</taxon>
        <taxon>Bacillota</taxon>
        <taxon>Bacilli</taxon>
        <taxon>Bacillales</taxon>
        <taxon>Bacillaceae</taxon>
        <taxon>Bacillus</taxon>
        <taxon>Bacillus cereus group</taxon>
    </lineage>
</organism>
<reference key="1">
    <citation type="submission" date="2008-10" db="EMBL/GenBank/DDBJ databases">
        <title>Genome sequence of Bacillus cereus G9842.</title>
        <authorList>
            <person name="Dodson R.J."/>
            <person name="Durkin A.S."/>
            <person name="Rosovitz M.J."/>
            <person name="Rasko D.A."/>
            <person name="Hoffmaster A."/>
            <person name="Ravel J."/>
            <person name="Sutton G."/>
        </authorList>
    </citation>
    <scope>NUCLEOTIDE SEQUENCE [LARGE SCALE GENOMIC DNA]</scope>
    <source>
        <strain>G9842</strain>
    </source>
</reference>
<sequence length="107" mass="12034">MIIVTNTAKITKGNGHKLIERFNKVGKVETMPGFLGLEVLLTQNTVDYDEVTISTRWNAKEDFQGWTKSAAFKDAHSHQGGMPEYILDNKIAYYDVKVVRMPMAAAQ</sequence>
<feature type="chain" id="PRO_1000140202" description="Heme-degrading monooxygenase">
    <location>
        <begin position="1"/>
        <end position="107"/>
    </location>
</feature>
<feature type="domain" description="ABM" evidence="1">
    <location>
        <begin position="2"/>
        <end position="94"/>
    </location>
</feature>
<feature type="binding site" evidence="1">
    <location>
        <position position="6"/>
    </location>
    <ligand>
        <name>Fe cation</name>
        <dbReference type="ChEBI" id="CHEBI:24875"/>
    </ligand>
</feature>
<feature type="binding site" description="axial binding residue" evidence="1">
    <location>
        <position position="76"/>
    </location>
    <ligand>
        <name>heme</name>
        <dbReference type="ChEBI" id="CHEBI:30413"/>
    </ligand>
    <ligandPart>
        <name>Fe</name>
        <dbReference type="ChEBI" id="CHEBI:18248"/>
    </ligandPart>
</feature>
<feature type="site" description="Transition state stabilizer" evidence="1">
    <location>
        <position position="66"/>
    </location>
</feature>
<gene>
    <name evidence="1" type="primary">isdG</name>
    <name type="ordered locus">BCG9842_B0586</name>
</gene>
<name>HDOX_BACC2</name>
<dbReference type="EC" id="1.14.14.18" evidence="1"/>
<dbReference type="EMBL" id="CP001186">
    <property type="protein sequence ID" value="ACK97486.1"/>
    <property type="molecule type" value="Genomic_DNA"/>
</dbReference>
<dbReference type="RefSeq" id="WP_000587818.1">
    <property type="nucleotide sequence ID" value="NC_011772.1"/>
</dbReference>
<dbReference type="SMR" id="B7IJU1"/>
<dbReference type="GeneID" id="72451203"/>
<dbReference type="KEGG" id="bcg:BCG9842_B0586"/>
<dbReference type="HOGENOM" id="CLU_141544_2_1_9"/>
<dbReference type="Proteomes" id="UP000006744">
    <property type="component" value="Chromosome"/>
</dbReference>
<dbReference type="GO" id="GO:0005737">
    <property type="term" value="C:cytoplasm"/>
    <property type="evidence" value="ECO:0007669"/>
    <property type="project" value="UniProtKB-SubCell"/>
</dbReference>
<dbReference type="GO" id="GO:0020037">
    <property type="term" value="F:heme binding"/>
    <property type="evidence" value="ECO:0007669"/>
    <property type="project" value="UniProtKB-UniRule"/>
</dbReference>
<dbReference type="GO" id="GO:0004392">
    <property type="term" value="F:heme oxygenase (decyclizing) activity"/>
    <property type="evidence" value="ECO:0007669"/>
    <property type="project" value="UniProtKB-UniRule"/>
</dbReference>
<dbReference type="GO" id="GO:0005506">
    <property type="term" value="F:iron ion binding"/>
    <property type="evidence" value="ECO:0007669"/>
    <property type="project" value="UniProtKB-UniRule"/>
</dbReference>
<dbReference type="GO" id="GO:0042167">
    <property type="term" value="P:heme catabolic process"/>
    <property type="evidence" value="ECO:0007669"/>
    <property type="project" value="UniProtKB-UniRule"/>
</dbReference>
<dbReference type="GO" id="GO:0033212">
    <property type="term" value="P:iron import into cell"/>
    <property type="evidence" value="ECO:0007669"/>
    <property type="project" value="InterPro"/>
</dbReference>
<dbReference type="Gene3D" id="3.30.70.100">
    <property type="match status" value="1"/>
</dbReference>
<dbReference type="HAMAP" id="MF_01272">
    <property type="entry name" value="Heme_degrading_monooxygenase"/>
    <property type="match status" value="1"/>
</dbReference>
<dbReference type="InterPro" id="IPR007138">
    <property type="entry name" value="ABM_dom"/>
</dbReference>
<dbReference type="InterPro" id="IPR011008">
    <property type="entry name" value="Dimeric_a/b-barrel"/>
</dbReference>
<dbReference type="InterPro" id="IPR050404">
    <property type="entry name" value="Heme-degrading_MO"/>
</dbReference>
<dbReference type="InterPro" id="IPR023953">
    <property type="entry name" value="IsdG"/>
</dbReference>
<dbReference type="NCBIfam" id="NF009839">
    <property type="entry name" value="PRK13314.1"/>
    <property type="match status" value="1"/>
</dbReference>
<dbReference type="PANTHER" id="PTHR34474:SF4">
    <property type="entry name" value="HEME OXYGENASE (STAPHYLOBILIN-PRODUCING) 1"/>
    <property type="match status" value="1"/>
</dbReference>
<dbReference type="PANTHER" id="PTHR34474">
    <property type="entry name" value="SIGNAL TRANSDUCTION PROTEIN TRAP"/>
    <property type="match status" value="1"/>
</dbReference>
<dbReference type="Pfam" id="PF03992">
    <property type="entry name" value="ABM"/>
    <property type="match status" value="1"/>
</dbReference>
<dbReference type="SUPFAM" id="SSF54909">
    <property type="entry name" value="Dimeric alpha+beta barrel"/>
    <property type="match status" value="1"/>
</dbReference>
<dbReference type="PROSITE" id="PS51725">
    <property type="entry name" value="ABM"/>
    <property type="match status" value="1"/>
</dbReference>
<comment type="function">
    <text evidence="1">Allows bacterial pathogens to use the host heme as an iron source. Catalyzes the oxidative degradation of the heme macrocyclic porphyrin ring to the biliverdin in the presence of a suitable electron donor such as ascorbate or NADPH--cytochrome P450 reductase, with subsequent release of free iron.</text>
</comment>
<comment type="catalytic activity">
    <reaction evidence="1">
        <text>heme b + 3 reduced [NADPH--hemoprotein reductase] + 3 O2 = biliverdin IXalpha + CO + Fe(2+) + 3 oxidized [NADPH--hemoprotein reductase] + 3 H2O + H(+)</text>
        <dbReference type="Rhea" id="RHEA:21764"/>
        <dbReference type="Rhea" id="RHEA-COMP:11964"/>
        <dbReference type="Rhea" id="RHEA-COMP:11965"/>
        <dbReference type="ChEBI" id="CHEBI:15377"/>
        <dbReference type="ChEBI" id="CHEBI:15378"/>
        <dbReference type="ChEBI" id="CHEBI:15379"/>
        <dbReference type="ChEBI" id="CHEBI:17245"/>
        <dbReference type="ChEBI" id="CHEBI:29033"/>
        <dbReference type="ChEBI" id="CHEBI:57618"/>
        <dbReference type="ChEBI" id="CHEBI:57991"/>
        <dbReference type="ChEBI" id="CHEBI:58210"/>
        <dbReference type="ChEBI" id="CHEBI:60344"/>
        <dbReference type="EC" id="1.14.14.18"/>
    </reaction>
</comment>
<comment type="subunit">
    <text evidence="1">Homodimer.</text>
</comment>
<comment type="subcellular location">
    <subcellularLocation>
        <location evidence="1">Cytoplasm</location>
    </subcellularLocation>
</comment>
<comment type="similarity">
    <text evidence="1">Belongs to the antibiotic biosynthesis monooxygenase family. Heme-degrading monooxygenase IsdG subfamily.</text>
</comment>